<evidence type="ECO:0000250" key="1"/>
<evidence type="ECO:0000255" key="2"/>
<evidence type="ECO:0000255" key="3">
    <source>
        <dbReference type="PROSITE-ProRule" id="PRU00159"/>
    </source>
</evidence>
<evidence type="ECO:0000255" key="4">
    <source>
        <dbReference type="PROSITE-ProRule" id="PRU10027"/>
    </source>
</evidence>
<evidence type="ECO:0000305" key="5"/>
<name>LK110_ARATH</name>
<accession>Q3E884</accession>
<protein>
    <recommendedName>
        <fullName>Putative L-type lectin-domain containing receptor kinase I.10</fullName>
        <shortName>LecRK-I.10</shortName>
        <ecNumber>2.7.11.1</ecNumber>
    </recommendedName>
</protein>
<dbReference type="EC" id="2.7.11.1"/>
<dbReference type="EMBL" id="AB026632">
    <property type="status" value="NOT_ANNOTATED_CDS"/>
    <property type="molecule type" value="Genomic_DNA"/>
</dbReference>
<dbReference type="EMBL" id="CP002688">
    <property type="protein sequence ID" value="AED97307.1"/>
    <property type="molecule type" value="Genomic_DNA"/>
</dbReference>
<dbReference type="RefSeq" id="NP_200839.1">
    <property type="nucleotide sequence ID" value="NM_125424.2"/>
</dbReference>
<dbReference type="SMR" id="Q3E884"/>
<dbReference type="STRING" id="3702.Q3E884"/>
<dbReference type="GlyCosmos" id="Q3E884">
    <property type="glycosylation" value="5 sites, No reported glycans"/>
</dbReference>
<dbReference type="GlyGen" id="Q3E884">
    <property type="glycosylation" value="5 sites"/>
</dbReference>
<dbReference type="PaxDb" id="3702-AT5G60310.1"/>
<dbReference type="EnsemblPlants" id="AT5G60310.1">
    <property type="protein sequence ID" value="AT5G60310.1"/>
    <property type="gene ID" value="AT5G60310"/>
</dbReference>
<dbReference type="GeneID" id="836153"/>
<dbReference type="Gramene" id="AT5G60310.1">
    <property type="protein sequence ID" value="AT5G60310.1"/>
    <property type="gene ID" value="AT5G60310"/>
</dbReference>
<dbReference type="KEGG" id="ath:AT5G60310"/>
<dbReference type="Araport" id="AT5G60310"/>
<dbReference type="TAIR" id="AT5G60310">
    <property type="gene designation" value="LECRK-I.10"/>
</dbReference>
<dbReference type="eggNOG" id="ENOG502QSJ4">
    <property type="taxonomic scope" value="Eukaryota"/>
</dbReference>
<dbReference type="HOGENOM" id="CLU_000288_62_3_1"/>
<dbReference type="InParanoid" id="Q3E884"/>
<dbReference type="OMA" id="TAISYQY"/>
<dbReference type="PhylomeDB" id="Q3E884"/>
<dbReference type="PRO" id="PR:Q3E884"/>
<dbReference type="Proteomes" id="UP000006548">
    <property type="component" value="Chromosome 5"/>
</dbReference>
<dbReference type="ExpressionAtlas" id="Q3E884">
    <property type="expression patterns" value="baseline and differential"/>
</dbReference>
<dbReference type="GO" id="GO:0005886">
    <property type="term" value="C:plasma membrane"/>
    <property type="evidence" value="ECO:0000250"/>
    <property type="project" value="UniProtKB"/>
</dbReference>
<dbReference type="GO" id="GO:0005524">
    <property type="term" value="F:ATP binding"/>
    <property type="evidence" value="ECO:0007669"/>
    <property type="project" value="UniProtKB-KW"/>
</dbReference>
<dbReference type="GO" id="GO:0030246">
    <property type="term" value="F:carbohydrate binding"/>
    <property type="evidence" value="ECO:0007669"/>
    <property type="project" value="UniProtKB-KW"/>
</dbReference>
<dbReference type="GO" id="GO:0106310">
    <property type="term" value="F:protein serine kinase activity"/>
    <property type="evidence" value="ECO:0007669"/>
    <property type="project" value="RHEA"/>
</dbReference>
<dbReference type="GO" id="GO:0004674">
    <property type="term" value="F:protein serine/threonine kinase activity"/>
    <property type="evidence" value="ECO:0007669"/>
    <property type="project" value="UniProtKB-KW"/>
</dbReference>
<dbReference type="CDD" id="cd06899">
    <property type="entry name" value="lectin_legume_LecRK_Arcelin_ConA"/>
    <property type="match status" value="1"/>
</dbReference>
<dbReference type="FunFam" id="3.30.200.20:FF:000451">
    <property type="entry name" value="L-type lectin-domain containing receptor kinase I.9"/>
    <property type="match status" value="1"/>
</dbReference>
<dbReference type="FunFam" id="2.60.120.200:FF:000096">
    <property type="entry name" value="L-type lectin-domain containing receptor kinase V.9"/>
    <property type="match status" value="1"/>
</dbReference>
<dbReference type="FunFam" id="1.10.510.10:FF:000240">
    <property type="entry name" value="Lectin-domain containing receptor kinase A4.3"/>
    <property type="match status" value="1"/>
</dbReference>
<dbReference type="Gene3D" id="2.60.120.200">
    <property type="match status" value="1"/>
</dbReference>
<dbReference type="Gene3D" id="3.30.200.20">
    <property type="entry name" value="Phosphorylase Kinase, domain 1"/>
    <property type="match status" value="1"/>
</dbReference>
<dbReference type="Gene3D" id="1.10.510.10">
    <property type="entry name" value="Transferase(Phosphotransferase) domain 1"/>
    <property type="match status" value="1"/>
</dbReference>
<dbReference type="InterPro" id="IPR013320">
    <property type="entry name" value="ConA-like_dom_sf"/>
</dbReference>
<dbReference type="InterPro" id="IPR011009">
    <property type="entry name" value="Kinase-like_dom_sf"/>
</dbReference>
<dbReference type="InterPro" id="IPR050528">
    <property type="entry name" value="L-type_Lectin-RKs"/>
</dbReference>
<dbReference type="InterPro" id="IPR001220">
    <property type="entry name" value="Legume_lectin_dom"/>
</dbReference>
<dbReference type="InterPro" id="IPR000719">
    <property type="entry name" value="Prot_kinase_dom"/>
</dbReference>
<dbReference type="InterPro" id="IPR008271">
    <property type="entry name" value="Ser/Thr_kinase_AS"/>
</dbReference>
<dbReference type="PANTHER" id="PTHR27007">
    <property type="match status" value="1"/>
</dbReference>
<dbReference type="Pfam" id="PF00139">
    <property type="entry name" value="Lectin_legB"/>
    <property type="match status" value="1"/>
</dbReference>
<dbReference type="Pfam" id="PF00069">
    <property type="entry name" value="Pkinase"/>
    <property type="match status" value="1"/>
</dbReference>
<dbReference type="SMART" id="SM00220">
    <property type="entry name" value="S_TKc"/>
    <property type="match status" value="1"/>
</dbReference>
<dbReference type="SUPFAM" id="SSF49899">
    <property type="entry name" value="Concanavalin A-like lectins/glucanases"/>
    <property type="match status" value="1"/>
</dbReference>
<dbReference type="SUPFAM" id="SSF56112">
    <property type="entry name" value="Protein kinase-like (PK-like)"/>
    <property type="match status" value="1"/>
</dbReference>
<dbReference type="PROSITE" id="PS00307">
    <property type="entry name" value="LECTIN_LEGUME_BETA"/>
    <property type="match status" value="1"/>
</dbReference>
<dbReference type="PROSITE" id="PS50011">
    <property type="entry name" value="PROTEIN_KINASE_DOM"/>
    <property type="match status" value="1"/>
</dbReference>
<dbReference type="PROSITE" id="PS00108">
    <property type="entry name" value="PROTEIN_KINASE_ST"/>
    <property type="match status" value="1"/>
</dbReference>
<keyword id="KW-0067">ATP-binding</keyword>
<keyword id="KW-1003">Cell membrane</keyword>
<keyword id="KW-0325">Glycoprotein</keyword>
<keyword id="KW-0418">Kinase</keyword>
<keyword id="KW-0430">Lectin</keyword>
<keyword id="KW-0472">Membrane</keyword>
<keyword id="KW-0547">Nucleotide-binding</keyword>
<keyword id="KW-0675">Receptor</keyword>
<keyword id="KW-1185">Reference proteome</keyword>
<keyword id="KW-0723">Serine/threonine-protein kinase</keyword>
<keyword id="KW-0732">Signal</keyword>
<keyword id="KW-0808">Transferase</keyword>
<keyword id="KW-0812">Transmembrane</keyword>
<keyword id="KW-1133">Transmembrane helix</keyword>
<feature type="signal peptide" evidence="2">
    <location>
        <begin position="1"/>
        <end position="22"/>
    </location>
</feature>
<feature type="chain" id="PRO_0000403079" description="Putative L-type lectin-domain containing receptor kinase I.10">
    <location>
        <begin position="23"/>
        <end position="616"/>
    </location>
</feature>
<feature type="topological domain" description="Extracellular" evidence="2">
    <location>
        <begin position="23"/>
        <end position="288"/>
    </location>
</feature>
<feature type="transmembrane region" description="Helical" evidence="2">
    <location>
        <begin position="289"/>
        <end position="309"/>
    </location>
</feature>
<feature type="topological domain" description="Cytoplasmic" evidence="2">
    <location>
        <begin position="310"/>
        <end position="616"/>
    </location>
</feature>
<feature type="domain" description="Protein kinase" evidence="3">
    <location>
        <begin position="343"/>
        <end position="616"/>
    </location>
</feature>
<feature type="region of interest" description="Legume-lectin like">
    <location>
        <begin position="24"/>
        <end position="258"/>
    </location>
</feature>
<feature type="active site" description="Proton acceptor" evidence="3 4">
    <location>
        <position position="467"/>
    </location>
</feature>
<feature type="binding site" evidence="3">
    <location>
        <begin position="349"/>
        <end position="357"/>
    </location>
    <ligand>
        <name>ATP</name>
        <dbReference type="ChEBI" id="CHEBI:30616"/>
    </ligand>
</feature>
<feature type="binding site" evidence="3">
    <location>
        <position position="371"/>
    </location>
    <ligand>
        <name>ATP</name>
        <dbReference type="ChEBI" id="CHEBI:30616"/>
    </ligand>
</feature>
<feature type="glycosylation site" description="N-linked (GlcNAc...) asparagine" evidence="2">
    <location>
        <position position="56"/>
    </location>
</feature>
<feature type="glycosylation site" description="N-linked (GlcNAc...) asparagine" evidence="2">
    <location>
        <position position="124"/>
    </location>
</feature>
<feature type="glycosylation site" description="N-linked (GlcNAc...) asparagine" evidence="2">
    <location>
        <position position="181"/>
    </location>
</feature>
<feature type="glycosylation site" description="N-linked (GlcNAc...) asparagine" evidence="2">
    <location>
        <position position="204"/>
    </location>
</feature>
<feature type="glycosylation site" description="N-linked (GlcNAc...) asparagine" evidence="2">
    <location>
        <position position="225"/>
    </location>
</feature>
<proteinExistence type="inferred from homology"/>
<gene>
    <name type="primary">LECRK110</name>
    <name type="ordered locus">At5g60310</name>
    <name type="ORF">F15L12.19</name>
</gene>
<comment type="catalytic activity">
    <reaction>
        <text>L-seryl-[protein] + ATP = O-phospho-L-seryl-[protein] + ADP + H(+)</text>
        <dbReference type="Rhea" id="RHEA:17989"/>
        <dbReference type="Rhea" id="RHEA-COMP:9863"/>
        <dbReference type="Rhea" id="RHEA-COMP:11604"/>
        <dbReference type="ChEBI" id="CHEBI:15378"/>
        <dbReference type="ChEBI" id="CHEBI:29999"/>
        <dbReference type="ChEBI" id="CHEBI:30616"/>
        <dbReference type="ChEBI" id="CHEBI:83421"/>
        <dbReference type="ChEBI" id="CHEBI:456216"/>
        <dbReference type="EC" id="2.7.11.1"/>
    </reaction>
</comment>
<comment type="catalytic activity">
    <reaction>
        <text>L-threonyl-[protein] + ATP = O-phospho-L-threonyl-[protein] + ADP + H(+)</text>
        <dbReference type="Rhea" id="RHEA:46608"/>
        <dbReference type="Rhea" id="RHEA-COMP:11060"/>
        <dbReference type="Rhea" id="RHEA-COMP:11605"/>
        <dbReference type="ChEBI" id="CHEBI:15378"/>
        <dbReference type="ChEBI" id="CHEBI:30013"/>
        <dbReference type="ChEBI" id="CHEBI:30616"/>
        <dbReference type="ChEBI" id="CHEBI:61977"/>
        <dbReference type="ChEBI" id="CHEBI:456216"/>
        <dbReference type="EC" id="2.7.11.1"/>
    </reaction>
</comment>
<comment type="subcellular location">
    <subcellularLocation>
        <location evidence="1">Cell membrane</location>
        <topology evidence="1">Single-pass type I membrane protein</topology>
    </subcellularLocation>
</comment>
<comment type="similarity">
    <text evidence="5">In the C-terminal section; belongs to the protein kinase superfamily. Ser/Thr protein kinase family.</text>
</comment>
<comment type="similarity">
    <text evidence="5">In the N-terminal section; belongs to the leguminous lectin family.</text>
</comment>
<organism>
    <name type="scientific">Arabidopsis thaliana</name>
    <name type="common">Mouse-ear cress</name>
    <dbReference type="NCBI Taxonomy" id="3702"/>
    <lineage>
        <taxon>Eukaryota</taxon>
        <taxon>Viridiplantae</taxon>
        <taxon>Streptophyta</taxon>
        <taxon>Embryophyta</taxon>
        <taxon>Tracheophyta</taxon>
        <taxon>Spermatophyta</taxon>
        <taxon>Magnoliopsida</taxon>
        <taxon>eudicotyledons</taxon>
        <taxon>Gunneridae</taxon>
        <taxon>Pentapetalae</taxon>
        <taxon>rosids</taxon>
        <taxon>malvids</taxon>
        <taxon>Brassicales</taxon>
        <taxon>Brassicaceae</taxon>
        <taxon>Camelineae</taxon>
        <taxon>Arabidopsis</taxon>
    </lineage>
</organism>
<sequence length="616" mass="68667">MAWGLFQILMISFFHLIKLSSQQETSFVYETFRSQENLYLDGSATVLPNGLLQLTNASDHQMAHVFYKDSIELSSSKPLSFSTHFVCALVPQPGVEGGHGMAFVVSPSMDFSHAESTRYLGIFNVSKNGSPSSNVLAVELDTIWNPDFEDIDHNHVGIDVNSPLSVGTASASYYSDIKGKNESINLLSGHPIQVWVDYEDNMLNVSMAPREVQKPSRPLLSQHINLSDIYPNRRLFVGFSAATGTAISYQYVLSWSFSTSRGSLQRFDISRLPEVPHPRAEHKNLSPLFIDLLGFLAIMGLCTLTGMYFFKRGKYAEITEEWENEFGAHRFSYKSLYKATKGFHKDGFLGKGGFGEVYRGKLLLSREKAVKRMSHDGDQGLKQFVAEVVSMRCLKHRNLVPLLGYCRRKHEFLLVSDYMTNGSLDEHLFDDQKPVLSWPQRLVIIKGIASALCYLHTGADQVVLHRDIKASNIMLDAEFNGRLGDFGMASFHDHGGISDSTCAVGTIGYMAPEILYMGASTRTDVYAFGVFMVEVTCGRRPVEPQLQLEKQILIEWVPESRPTMEQVILYLNQNLPLPDFSPYTVGISNHSSVLIDAASLVASRSWSAASSATNSP</sequence>
<reference key="1">
    <citation type="submission" date="1999-04" db="EMBL/GenBank/DDBJ databases">
        <title>Structural analysis of Arabidopsis thaliana chromosome 5. XI.</title>
        <authorList>
            <person name="Kaneko T."/>
            <person name="Katoh T."/>
            <person name="Asamizu E."/>
            <person name="Sato S."/>
            <person name="Nakamura Y."/>
            <person name="Kotani H."/>
            <person name="Tabata S."/>
        </authorList>
    </citation>
    <scope>NUCLEOTIDE SEQUENCE [LARGE SCALE GENOMIC DNA]</scope>
    <source>
        <strain>cv. Columbia</strain>
    </source>
</reference>
<reference key="2">
    <citation type="journal article" date="2017" name="Plant J.">
        <title>Araport11: a complete reannotation of the Arabidopsis thaliana reference genome.</title>
        <authorList>
            <person name="Cheng C.Y."/>
            <person name="Krishnakumar V."/>
            <person name="Chan A.P."/>
            <person name="Thibaud-Nissen F."/>
            <person name="Schobel S."/>
            <person name="Town C.D."/>
        </authorList>
    </citation>
    <scope>GENOME REANNOTATION</scope>
    <source>
        <strain>cv. Columbia</strain>
    </source>
</reference>
<reference key="3">
    <citation type="journal article" date="2002" name="Crit. Rev. Plant Sci.">
        <title>Lectin receptor kinases in plants.</title>
        <authorList>
            <person name="Barre A."/>
            <person name="Herve C."/>
            <person name="Lescure B."/>
            <person name="Rouge P."/>
        </authorList>
    </citation>
    <scope>GENE FAMILY</scope>
</reference>
<reference key="4">
    <citation type="journal article" date="2009" name="J. Exp. Bot.">
        <title>Arabidopsis L-type lectin receptor kinases: phylogeny, classification, and expression profiles.</title>
        <authorList>
            <person name="Bouwmeester K."/>
            <person name="Govers F."/>
        </authorList>
    </citation>
    <scope>GENE FAMILY</scope>
    <scope>NOMENCLATURE</scope>
</reference>